<evidence type="ECO:0000305" key="1"/>
<dbReference type="EMBL" id="AC024174">
    <property type="protein sequence ID" value="AAF80138.1"/>
    <property type="status" value="ALT_SEQ"/>
    <property type="molecule type" value="Genomic_DNA"/>
</dbReference>
<dbReference type="EMBL" id="CP002684">
    <property type="protein sequence ID" value="ANM60157.1"/>
    <property type="molecule type" value="Genomic_DNA"/>
</dbReference>
<dbReference type="EMBL" id="AK221874">
    <property type="protein sequence ID" value="BAD94184.1"/>
    <property type="molecule type" value="mRNA"/>
</dbReference>
<dbReference type="PIR" id="H86196">
    <property type="entry name" value="H86196"/>
</dbReference>
<dbReference type="RefSeq" id="NP_001322461.1">
    <property type="nucleotide sequence ID" value="NM_001331615.1"/>
</dbReference>
<dbReference type="SMR" id="Q56X05"/>
<dbReference type="FunCoup" id="Q56X05">
    <property type="interactions" value="227"/>
</dbReference>
<dbReference type="STRING" id="3702.Q56X05"/>
<dbReference type="ProteomicsDB" id="234864"/>
<dbReference type="EnsemblPlants" id="AT1G06143.1">
    <property type="protein sequence ID" value="AT1G06143.1"/>
    <property type="gene ID" value="AT1G06143"/>
</dbReference>
<dbReference type="GeneID" id="28716441"/>
<dbReference type="Gramene" id="AT1G06143.1">
    <property type="protein sequence ID" value="AT1G06143.1"/>
    <property type="gene ID" value="AT1G06143"/>
</dbReference>
<dbReference type="KEGG" id="ath:AT1G06143"/>
<dbReference type="Araport" id="AT1G06143"/>
<dbReference type="TAIR" id="AT1G06143"/>
<dbReference type="HOGENOM" id="CLU_005978_0_0_1"/>
<dbReference type="InParanoid" id="Q56X05"/>
<dbReference type="OMA" id="AVHGHIW"/>
<dbReference type="PhylomeDB" id="Q56X05"/>
<dbReference type="PRO" id="PR:Q56X05"/>
<dbReference type="Proteomes" id="UP000006548">
    <property type="component" value="Chromosome 1"/>
</dbReference>
<dbReference type="ExpressionAtlas" id="Q56X05">
    <property type="expression patterns" value="baseline and differential"/>
</dbReference>
<dbReference type="GO" id="GO:0003700">
    <property type="term" value="F:DNA-binding transcription factor activity"/>
    <property type="evidence" value="ECO:0000250"/>
    <property type="project" value="TAIR"/>
</dbReference>
<dbReference type="GO" id="GO:0003723">
    <property type="term" value="F:RNA binding"/>
    <property type="evidence" value="ECO:0007669"/>
    <property type="project" value="InterPro"/>
</dbReference>
<dbReference type="GO" id="GO:0009451">
    <property type="term" value="P:RNA modification"/>
    <property type="evidence" value="ECO:0007669"/>
    <property type="project" value="InterPro"/>
</dbReference>
<dbReference type="FunFam" id="1.25.40.10:FF:000934">
    <property type="entry name" value="Pentatricopeptide repeat-containing protein"/>
    <property type="match status" value="1"/>
</dbReference>
<dbReference type="FunFam" id="1.25.40.10:FF:000184">
    <property type="entry name" value="Pentatricopeptide repeat-containing protein, chloroplastic"/>
    <property type="match status" value="1"/>
</dbReference>
<dbReference type="FunFam" id="1.25.40.10:FF:000804">
    <property type="entry name" value="Pentatricopeptide repeat-containing protein, chloroplastic"/>
    <property type="match status" value="1"/>
</dbReference>
<dbReference type="Gene3D" id="1.25.40.10">
    <property type="entry name" value="Tetratricopeptide repeat domain"/>
    <property type="match status" value="4"/>
</dbReference>
<dbReference type="InterPro" id="IPR046848">
    <property type="entry name" value="E_motif"/>
</dbReference>
<dbReference type="InterPro" id="IPR002885">
    <property type="entry name" value="Pentatricopeptide_rpt"/>
</dbReference>
<dbReference type="InterPro" id="IPR046960">
    <property type="entry name" value="PPR_At4g14850-like_plant"/>
</dbReference>
<dbReference type="InterPro" id="IPR011990">
    <property type="entry name" value="TPR-like_helical_dom_sf"/>
</dbReference>
<dbReference type="NCBIfam" id="TIGR00756">
    <property type="entry name" value="PPR"/>
    <property type="match status" value="4"/>
</dbReference>
<dbReference type="PANTHER" id="PTHR47926">
    <property type="entry name" value="PENTATRICOPEPTIDE REPEAT-CONTAINING PROTEIN"/>
    <property type="match status" value="1"/>
</dbReference>
<dbReference type="PANTHER" id="PTHR47926:SF376">
    <property type="entry name" value="TETRATRICOPEPTIDE-LIKE HELICAL DOMAIN SUPERFAMILY"/>
    <property type="match status" value="1"/>
</dbReference>
<dbReference type="Pfam" id="PF20431">
    <property type="entry name" value="E_motif"/>
    <property type="match status" value="1"/>
</dbReference>
<dbReference type="Pfam" id="PF01535">
    <property type="entry name" value="PPR"/>
    <property type="match status" value="3"/>
</dbReference>
<dbReference type="Pfam" id="PF13041">
    <property type="entry name" value="PPR_2"/>
    <property type="match status" value="3"/>
</dbReference>
<dbReference type="PROSITE" id="PS51375">
    <property type="entry name" value="PPR"/>
    <property type="match status" value="11"/>
</dbReference>
<proteinExistence type="evidence at transcript level"/>
<keyword id="KW-1185">Reference proteome</keyword>
<keyword id="KW-0677">Repeat</keyword>
<gene>
    <name type="primary">EMB1444</name>
    <name type="synonym">PCMP-E62</name>
    <name type="ordered locus">At1g06143</name>
    <name type="ORF">T21E18.20</name>
</gene>
<name>PPR15_ARATH</name>
<accession>Q56X05</accession>
<accession>F4IC01</accession>
<accession>Q9LND3</accession>
<sequence length="577" mass="65069">MNAFANVHSLRVPSHHLRDFSASLSLAPPNLKKIIKQCSTPKLLESALAAMIKTSLNQDCRLMNQFITACTSFKRLDLAVSTMTQMQEPNVFVYNALFKGFVTCSHPIRSLELYVRMLRDSVSPSSYTYSSLVKASSFASRFGESLQAHIWKFGFGFHVKIQTTLIDFYSATGRIREARKVFDEMPERDDIAWTTMVSAYRRVLDMDSANSLANQMSEKNEATSNCLINGYMGLGNLEQAESLFNQMPVKDIISWTTMIKGYSQNKRYREAIAVFYKMMEEGIIPDEVTMSTVISACAHLGVLEIGKEVHMYTLQNGFVLDVYIGSALVDMYSKCGSLERALLVFFNLPKKNLFCWNSIIEGLAAHGFAQEALKMFAKMEMESVKPNAVTFVSVFTACTHAGLVDEGRRIYRSMIDDYSIVSNVEHYGGMVHLFSKAGLIYEALELIGNMEFEPNAVIWGALLDGCRIHKNLVIAEIAFNKLMVLEPMNSGYYFLLVSMYAEQNRWRDVAEIRGRMRELGIEKICPGTSSIRIDKRDHLFAAADKSHSASDEVCLLLDEIYDQMGLAGYVQETENVY</sequence>
<feature type="chain" id="PRO_0000342756" description="Pentatricopeptide repeat-containing protein At1g06143">
    <location>
        <begin position="1"/>
        <end position="577"/>
    </location>
</feature>
<feature type="repeat" description="PPR 1">
    <location>
        <begin position="59"/>
        <end position="89"/>
    </location>
</feature>
<feature type="repeat" description="PPR 2">
    <location>
        <begin position="90"/>
        <end position="124"/>
    </location>
</feature>
<feature type="repeat" description="PPR 3">
    <location>
        <begin position="125"/>
        <end position="155"/>
    </location>
</feature>
<feature type="repeat" description="PPR 4">
    <location>
        <begin position="158"/>
        <end position="192"/>
    </location>
</feature>
<feature type="repeat" description="PPR 5">
    <location>
        <begin position="193"/>
        <end position="219"/>
    </location>
</feature>
<feature type="repeat" description="PPR 6">
    <location>
        <begin position="220"/>
        <end position="250"/>
    </location>
</feature>
<feature type="repeat" description="PPR 7">
    <location>
        <begin position="251"/>
        <end position="285"/>
    </location>
</feature>
<feature type="repeat" description="PPR 8">
    <location>
        <begin position="286"/>
        <end position="320"/>
    </location>
</feature>
<feature type="repeat" description="PPR 9">
    <location>
        <begin position="321"/>
        <end position="351"/>
    </location>
</feature>
<feature type="repeat" description="PPR 10">
    <location>
        <begin position="352"/>
        <end position="386"/>
    </location>
</feature>
<feature type="repeat" description="PPR 11">
    <location>
        <begin position="387"/>
        <end position="417"/>
    </location>
</feature>
<feature type="repeat" description="PPR 12">
    <location>
        <begin position="423"/>
        <end position="453"/>
    </location>
</feature>
<feature type="region of interest" description="Type E motif">
    <location>
        <begin position="458"/>
        <end position="534"/>
    </location>
</feature>
<feature type="region of interest" description="Type E(+) motif">
    <location>
        <begin position="535"/>
        <end position="565"/>
    </location>
</feature>
<feature type="sequence conflict" description="In Ref. 3; BAD94184." evidence="1" ref="3">
    <original>R</original>
    <variation>C</variation>
    <location>
        <position position="75"/>
    </location>
</feature>
<feature type="sequence conflict" description="In Ref. 3; BAD94184." evidence="1" ref="3">
    <original>R</original>
    <variation>G</variation>
    <location>
        <position position="174"/>
    </location>
</feature>
<comment type="similarity">
    <text evidence="1">Belongs to the PPR family. PCMP-E subfamily.</text>
</comment>
<comment type="sequence caution" evidence="1">
    <conflict type="erroneous gene model prediction">
        <sequence resource="EMBL-CDS" id="AAF80138"/>
    </conflict>
    <text>The predicted gene has been split into 2 genes: At1g06143 and At1g06150.</text>
</comment>
<comment type="online information" name="Pentatricopeptide repeat proteins">
    <link uri="https://ppr.plantenergy.uwa.edu.au"/>
</comment>
<protein>
    <recommendedName>
        <fullName>Pentatricopeptide repeat-containing protein At1g06143</fullName>
    </recommendedName>
    <alternativeName>
        <fullName>Protein EMBRYO DEFECTIVE 1444</fullName>
    </alternativeName>
</protein>
<organism>
    <name type="scientific">Arabidopsis thaliana</name>
    <name type="common">Mouse-ear cress</name>
    <dbReference type="NCBI Taxonomy" id="3702"/>
    <lineage>
        <taxon>Eukaryota</taxon>
        <taxon>Viridiplantae</taxon>
        <taxon>Streptophyta</taxon>
        <taxon>Embryophyta</taxon>
        <taxon>Tracheophyta</taxon>
        <taxon>Spermatophyta</taxon>
        <taxon>Magnoliopsida</taxon>
        <taxon>eudicotyledons</taxon>
        <taxon>Gunneridae</taxon>
        <taxon>Pentapetalae</taxon>
        <taxon>rosids</taxon>
        <taxon>malvids</taxon>
        <taxon>Brassicales</taxon>
        <taxon>Brassicaceae</taxon>
        <taxon>Camelineae</taxon>
        <taxon>Arabidopsis</taxon>
    </lineage>
</organism>
<reference key="1">
    <citation type="journal article" date="2000" name="Nature">
        <title>Sequence and analysis of chromosome 1 of the plant Arabidopsis thaliana.</title>
        <authorList>
            <person name="Theologis A."/>
            <person name="Ecker J.R."/>
            <person name="Palm C.J."/>
            <person name="Federspiel N.A."/>
            <person name="Kaul S."/>
            <person name="White O."/>
            <person name="Alonso J."/>
            <person name="Altafi H."/>
            <person name="Araujo R."/>
            <person name="Bowman C.L."/>
            <person name="Brooks S.Y."/>
            <person name="Buehler E."/>
            <person name="Chan A."/>
            <person name="Chao Q."/>
            <person name="Chen H."/>
            <person name="Cheuk R.F."/>
            <person name="Chin C.W."/>
            <person name="Chung M.K."/>
            <person name="Conn L."/>
            <person name="Conway A.B."/>
            <person name="Conway A.R."/>
            <person name="Creasy T.H."/>
            <person name="Dewar K."/>
            <person name="Dunn P."/>
            <person name="Etgu P."/>
            <person name="Feldblyum T.V."/>
            <person name="Feng J.-D."/>
            <person name="Fong B."/>
            <person name="Fujii C.Y."/>
            <person name="Gill J.E."/>
            <person name="Goldsmith A.D."/>
            <person name="Haas B."/>
            <person name="Hansen N.F."/>
            <person name="Hughes B."/>
            <person name="Huizar L."/>
            <person name="Hunter J.L."/>
            <person name="Jenkins J."/>
            <person name="Johnson-Hopson C."/>
            <person name="Khan S."/>
            <person name="Khaykin E."/>
            <person name="Kim C.J."/>
            <person name="Koo H.L."/>
            <person name="Kremenetskaia I."/>
            <person name="Kurtz D.B."/>
            <person name="Kwan A."/>
            <person name="Lam B."/>
            <person name="Langin-Hooper S."/>
            <person name="Lee A."/>
            <person name="Lee J.M."/>
            <person name="Lenz C.A."/>
            <person name="Li J.H."/>
            <person name="Li Y.-P."/>
            <person name="Lin X."/>
            <person name="Liu S.X."/>
            <person name="Liu Z.A."/>
            <person name="Luros J.S."/>
            <person name="Maiti R."/>
            <person name="Marziali A."/>
            <person name="Militscher J."/>
            <person name="Miranda M."/>
            <person name="Nguyen M."/>
            <person name="Nierman W.C."/>
            <person name="Osborne B.I."/>
            <person name="Pai G."/>
            <person name="Peterson J."/>
            <person name="Pham P.K."/>
            <person name="Rizzo M."/>
            <person name="Rooney T."/>
            <person name="Rowley D."/>
            <person name="Sakano H."/>
            <person name="Salzberg S.L."/>
            <person name="Schwartz J.R."/>
            <person name="Shinn P."/>
            <person name="Southwick A.M."/>
            <person name="Sun H."/>
            <person name="Tallon L.J."/>
            <person name="Tambunga G."/>
            <person name="Toriumi M.J."/>
            <person name="Town C.D."/>
            <person name="Utterback T."/>
            <person name="Van Aken S."/>
            <person name="Vaysberg M."/>
            <person name="Vysotskaia V.S."/>
            <person name="Walker M."/>
            <person name="Wu D."/>
            <person name="Yu G."/>
            <person name="Fraser C.M."/>
            <person name="Venter J.C."/>
            <person name="Davis R.W."/>
        </authorList>
    </citation>
    <scope>NUCLEOTIDE SEQUENCE [LARGE SCALE GENOMIC DNA]</scope>
    <source>
        <strain>cv. Columbia</strain>
    </source>
</reference>
<reference key="2">
    <citation type="journal article" date="2017" name="Plant J.">
        <title>Araport11: a complete reannotation of the Arabidopsis thaliana reference genome.</title>
        <authorList>
            <person name="Cheng C.Y."/>
            <person name="Krishnakumar V."/>
            <person name="Chan A.P."/>
            <person name="Thibaud-Nissen F."/>
            <person name="Schobel S."/>
            <person name="Town C.D."/>
        </authorList>
    </citation>
    <scope>GENOME REANNOTATION</scope>
    <source>
        <strain>cv. Columbia</strain>
    </source>
</reference>
<reference key="3">
    <citation type="submission" date="2005-03" db="EMBL/GenBank/DDBJ databases">
        <title>Large-scale analysis of RIKEN Arabidopsis full-length (RAFL) cDNAs.</title>
        <authorList>
            <person name="Totoki Y."/>
            <person name="Seki M."/>
            <person name="Ishida J."/>
            <person name="Nakajima M."/>
            <person name="Enju A."/>
            <person name="Kamiya A."/>
            <person name="Narusaka M."/>
            <person name="Shin-i T."/>
            <person name="Nakagawa M."/>
            <person name="Sakamoto N."/>
            <person name="Oishi K."/>
            <person name="Kohara Y."/>
            <person name="Kobayashi M."/>
            <person name="Toyoda A."/>
            <person name="Sakaki Y."/>
            <person name="Sakurai T."/>
            <person name="Iida K."/>
            <person name="Akiyama K."/>
            <person name="Satou M."/>
            <person name="Toyoda T."/>
            <person name="Konagaya A."/>
            <person name="Carninci P."/>
            <person name="Kawai J."/>
            <person name="Hayashizaki Y."/>
            <person name="Shinozaki K."/>
        </authorList>
    </citation>
    <scope>NUCLEOTIDE SEQUENCE [LARGE SCALE MRNA]</scope>
    <source>
        <strain>cv. Columbia</strain>
    </source>
</reference>
<reference key="4">
    <citation type="journal article" date="2004" name="Plant Cell">
        <title>Genome-wide analysis of Arabidopsis pentatricopeptide repeat proteins reveals their essential role in organelle biogenesis.</title>
        <authorList>
            <person name="Lurin C."/>
            <person name="Andres C."/>
            <person name="Aubourg S."/>
            <person name="Bellaoui M."/>
            <person name="Bitton F."/>
            <person name="Bruyere C."/>
            <person name="Caboche M."/>
            <person name="Debast C."/>
            <person name="Gualberto J."/>
            <person name="Hoffmann B."/>
            <person name="Lecharny A."/>
            <person name="Le Ret M."/>
            <person name="Martin-Magniette M.-L."/>
            <person name="Mireau H."/>
            <person name="Peeters N."/>
            <person name="Renou J.-P."/>
            <person name="Szurek B."/>
            <person name="Taconnat L."/>
            <person name="Small I."/>
        </authorList>
    </citation>
    <scope>GENE FAMILY</scope>
</reference>